<name>STUA_GIBM7</name>
<feature type="chain" id="PRO_0000435976" description="Cell pattern formation-associated protein StuA">
    <location>
        <begin position="1"/>
        <end position="549"/>
    </location>
</feature>
<feature type="domain" description="HTH APSES-type" evidence="2">
    <location>
        <begin position="86"/>
        <end position="192"/>
    </location>
</feature>
<feature type="DNA-binding region" description="H-T-H motif" evidence="2">
    <location>
        <begin position="120"/>
        <end position="141"/>
    </location>
</feature>
<feature type="region of interest" description="Disordered" evidence="3">
    <location>
        <begin position="205"/>
        <end position="227"/>
    </location>
</feature>
<feature type="region of interest" description="Disordered" evidence="3">
    <location>
        <begin position="246"/>
        <end position="288"/>
    </location>
</feature>
<feature type="region of interest" description="Disordered" evidence="3">
    <location>
        <begin position="332"/>
        <end position="466"/>
    </location>
</feature>
<feature type="region of interest" description="Disordered" evidence="3">
    <location>
        <begin position="514"/>
        <end position="549"/>
    </location>
</feature>
<feature type="region of interest" description="Nuclear localization domain" evidence="1">
    <location>
        <begin position="516"/>
        <end position="545"/>
    </location>
</feature>
<feature type="compositionally biased region" description="Polar residues" evidence="3">
    <location>
        <begin position="246"/>
        <end position="266"/>
    </location>
</feature>
<feature type="compositionally biased region" description="Basic and acidic residues" evidence="3">
    <location>
        <begin position="278"/>
        <end position="288"/>
    </location>
</feature>
<feature type="compositionally biased region" description="Basic and acidic residues" evidence="3">
    <location>
        <begin position="332"/>
        <end position="346"/>
    </location>
</feature>
<feature type="compositionally biased region" description="Basic and acidic residues" evidence="3">
    <location>
        <begin position="385"/>
        <end position="395"/>
    </location>
</feature>
<feature type="compositionally biased region" description="Low complexity" evidence="3">
    <location>
        <begin position="532"/>
        <end position="549"/>
    </location>
</feature>
<sequence>MNQGHPQPDMYYSPHYSTPQYGYGYSTNGAPTTAVSTPMPAPQNVLPVPSALSNQGAMQQPGYSNSSNNGAFDTTGQHNPPGMKPRVTATLWEDEGSLCFQVEARGICVARREDNHMINGTKLLNVAGMTRGRRDGILKSEKVRHVVKIGPMHLKGVWIPYDRALDFANKEKITELLFPLFVHNIGALLYHPSNSNRTSQVMAAAERRKHEGLGGQRPPAPNALPSIGQHHPMMPGLPTGGYVPQSLANGPQSLASTPQPLANGSQPPMPNGGGMLKRGREEEEDLHRPVSNGHDPMSNMHAMSNGYPQQPPLANVHQPPMQNGGDMLKRGREEDDEVHRSAHNAHDTMNNMPGSMPGMSNAYAQPLPNVHHQPLANGDGGMLKRGRDEDDDHRSSPNGHDSAGNFEAKRRKTITSNDSMVSPGGFYTLHNGYGQPGVMNGMSPYKRRDDEAETPRPGPNVHDHLNNFDLKRHKTMETSVPAPQYDAMNRPHSSIGTSPSYAPAPVYDNLARPASTVAASPSYPSAPVYDTAARPPSAISAPRRQQSFG</sequence>
<organism>
    <name type="scientific">Gibberella moniliformis (strain M3125 / FGSC 7600)</name>
    <name type="common">Maize ear and stalk rot fungus</name>
    <name type="synonym">Fusarium verticillioides</name>
    <dbReference type="NCBI Taxonomy" id="334819"/>
    <lineage>
        <taxon>Eukaryota</taxon>
        <taxon>Fungi</taxon>
        <taxon>Dikarya</taxon>
        <taxon>Ascomycota</taxon>
        <taxon>Pezizomycotina</taxon>
        <taxon>Sordariomycetes</taxon>
        <taxon>Hypocreomycetidae</taxon>
        <taxon>Hypocreales</taxon>
        <taxon>Nectriaceae</taxon>
        <taxon>Fusarium</taxon>
        <taxon>Fusarium fujikuroi species complex</taxon>
    </lineage>
</organism>
<keyword id="KW-0183">Conidiation</keyword>
<keyword id="KW-0238">DNA-binding</keyword>
<keyword id="KW-0539">Nucleus</keyword>
<keyword id="KW-0597">Phosphoprotein</keyword>
<keyword id="KW-1185">Reference proteome</keyword>
<keyword id="KW-0749">Sporulation</keyword>
<keyword id="KW-0804">Transcription</keyword>
<keyword id="KW-0805">Transcription regulation</keyword>
<evidence type="ECO:0000250" key="1">
    <source>
        <dbReference type="UniProtKB" id="P36011"/>
    </source>
</evidence>
<evidence type="ECO:0000255" key="2">
    <source>
        <dbReference type="PROSITE-ProRule" id="PRU00630"/>
    </source>
</evidence>
<evidence type="ECO:0000256" key="3">
    <source>
        <dbReference type="SAM" id="MobiDB-lite"/>
    </source>
</evidence>
<evidence type="ECO:0000269" key="4">
    <source>
    </source>
</evidence>
<evidence type="ECO:0000303" key="5">
    <source>
    </source>
</evidence>
<evidence type="ECO:0000305" key="6"/>
<dbReference type="EMBL" id="CM000582">
    <property type="protein sequence ID" value="EWG40475.1"/>
    <property type="molecule type" value="Genomic_DNA"/>
</dbReference>
<dbReference type="EMBL" id="CM000582">
    <property type="protein sequence ID" value="EWG40476.1"/>
    <property type="molecule type" value="Genomic_DNA"/>
</dbReference>
<dbReference type="RefSeq" id="XP_018746666.1">
    <property type="nucleotide sequence ID" value="XM_018890367.1"/>
</dbReference>
<dbReference type="RefSeq" id="XP_018746667.1">
    <property type="nucleotide sequence ID" value="XM_018890368.1"/>
</dbReference>
<dbReference type="SMR" id="W7LYY0"/>
<dbReference type="STRING" id="334819.W7LYY0"/>
<dbReference type="EnsemblFungi" id="FVEG_02853T0">
    <property type="protein sequence ID" value="FVEG_02853T0"/>
    <property type="gene ID" value="FVEG_02853"/>
</dbReference>
<dbReference type="GeneID" id="30061033"/>
<dbReference type="KEGG" id="fvr:FVEG_02853"/>
<dbReference type="VEuPathDB" id="FungiDB:FVEG_02853"/>
<dbReference type="eggNOG" id="ENOG502QW2C">
    <property type="taxonomic scope" value="Eukaryota"/>
</dbReference>
<dbReference type="HOGENOM" id="CLU_016460_0_0_1"/>
<dbReference type="OMA" id="NGHDPMN"/>
<dbReference type="OrthoDB" id="56448at110618"/>
<dbReference type="Proteomes" id="UP000009096">
    <property type="component" value="Chromosome 5"/>
</dbReference>
<dbReference type="GO" id="GO:0005634">
    <property type="term" value="C:nucleus"/>
    <property type="evidence" value="ECO:0007669"/>
    <property type="project" value="UniProtKB-SubCell"/>
</dbReference>
<dbReference type="GO" id="GO:0003700">
    <property type="term" value="F:DNA-binding transcription factor activity"/>
    <property type="evidence" value="ECO:0007669"/>
    <property type="project" value="TreeGrafter"/>
</dbReference>
<dbReference type="GO" id="GO:0043565">
    <property type="term" value="F:sequence-specific DNA binding"/>
    <property type="evidence" value="ECO:0007669"/>
    <property type="project" value="TreeGrafter"/>
</dbReference>
<dbReference type="GO" id="GO:0048315">
    <property type="term" value="P:conidium formation"/>
    <property type="evidence" value="ECO:0007669"/>
    <property type="project" value="UniProtKB-KW"/>
</dbReference>
<dbReference type="GO" id="GO:0045944">
    <property type="term" value="P:positive regulation of transcription by RNA polymerase II"/>
    <property type="evidence" value="ECO:0007669"/>
    <property type="project" value="TreeGrafter"/>
</dbReference>
<dbReference type="GO" id="GO:0030435">
    <property type="term" value="P:sporulation resulting in formation of a cellular spore"/>
    <property type="evidence" value="ECO:0007669"/>
    <property type="project" value="UniProtKB-KW"/>
</dbReference>
<dbReference type="FunFam" id="3.10.260.10:FF:000003">
    <property type="entry name" value="Ascospore maturation 1 protein"/>
    <property type="match status" value="1"/>
</dbReference>
<dbReference type="Gene3D" id="3.10.260.10">
    <property type="entry name" value="Transcription regulator HTH, APSES-type DNA-binding domain"/>
    <property type="match status" value="1"/>
</dbReference>
<dbReference type="InterPro" id="IPR029790">
    <property type="entry name" value="EFG1/Phd1/StuA"/>
</dbReference>
<dbReference type="InterPro" id="IPR036887">
    <property type="entry name" value="HTH_APSES_sf"/>
</dbReference>
<dbReference type="InterPro" id="IPR018004">
    <property type="entry name" value="KilA/APSES_HTH"/>
</dbReference>
<dbReference type="InterPro" id="IPR003163">
    <property type="entry name" value="Tscrpt_reg_HTH_APSES-type"/>
</dbReference>
<dbReference type="PANTHER" id="PTHR47792">
    <property type="entry name" value="PROTEIN SOK2-RELATED"/>
    <property type="match status" value="1"/>
</dbReference>
<dbReference type="PANTHER" id="PTHR47792:SF1">
    <property type="entry name" value="PROTEIN SOK2-RELATED"/>
    <property type="match status" value="1"/>
</dbReference>
<dbReference type="Pfam" id="PF04383">
    <property type="entry name" value="KilA-N"/>
    <property type="match status" value="1"/>
</dbReference>
<dbReference type="SMART" id="SM01252">
    <property type="entry name" value="KilA-N"/>
    <property type="match status" value="1"/>
</dbReference>
<dbReference type="SUPFAM" id="SSF54616">
    <property type="entry name" value="DNA-binding domain of Mlu1-box binding protein MBP1"/>
    <property type="match status" value="1"/>
</dbReference>
<dbReference type="PROSITE" id="PS51299">
    <property type="entry name" value="HTH_APSES"/>
    <property type="match status" value="1"/>
</dbReference>
<accession>W7LYY0</accession>
<gene>
    <name evidence="5" type="primary">StuA</name>
    <name type="ORF">FVEG_02853</name>
</gene>
<protein>
    <recommendedName>
        <fullName evidence="6">Cell pattern formation-associated protein StuA</fullName>
    </recommendedName>
    <alternativeName>
        <fullName evidence="1">Stunted protein A</fullName>
    </alternativeName>
</protein>
<reference key="1">
    <citation type="journal article" date="2010" name="Nature">
        <title>Comparative genomics reveals mobile pathogenicity chromosomes in Fusarium.</title>
        <authorList>
            <person name="Ma L.-J."/>
            <person name="van der Does H.C."/>
            <person name="Borkovich K.A."/>
            <person name="Coleman J.J."/>
            <person name="Daboussi M.-J."/>
            <person name="Di Pietro A."/>
            <person name="Dufresne M."/>
            <person name="Freitag M."/>
            <person name="Grabherr M."/>
            <person name="Henrissat B."/>
            <person name="Houterman P.M."/>
            <person name="Kang S."/>
            <person name="Shim W.-B."/>
            <person name="Woloshuk C."/>
            <person name="Xie X."/>
            <person name="Xu J.-R."/>
            <person name="Antoniw J."/>
            <person name="Baker S.E."/>
            <person name="Bluhm B.H."/>
            <person name="Breakspear A."/>
            <person name="Brown D.W."/>
            <person name="Butchko R.A.E."/>
            <person name="Chapman S."/>
            <person name="Coulson R."/>
            <person name="Coutinho P.M."/>
            <person name="Danchin E.G.J."/>
            <person name="Diener A."/>
            <person name="Gale L.R."/>
            <person name="Gardiner D.M."/>
            <person name="Goff S."/>
            <person name="Hammond-Kosack K.E."/>
            <person name="Hilburn K."/>
            <person name="Hua-Van A."/>
            <person name="Jonkers W."/>
            <person name="Kazan K."/>
            <person name="Kodira C.D."/>
            <person name="Koehrsen M."/>
            <person name="Kumar L."/>
            <person name="Lee Y.-H."/>
            <person name="Li L."/>
            <person name="Manners J.M."/>
            <person name="Miranda-Saavedra D."/>
            <person name="Mukherjee M."/>
            <person name="Park G."/>
            <person name="Park J."/>
            <person name="Park S.-Y."/>
            <person name="Proctor R.H."/>
            <person name="Regev A."/>
            <person name="Ruiz-Roldan M.C."/>
            <person name="Sain D."/>
            <person name="Sakthikumar S."/>
            <person name="Sykes S."/>
            <person name="Schwartz D.C."/>
            <person name="Turgeon B.G."/>
            <person name="Wapinski I."/>
            <person name="Yoder O."/>
            <person name="Young S."/>
            <person name="Zeng Q."/>
            <person name="Zhou S."/>
            <person name="Galagan J."/>
            <person name="Cuomo C.A."/>
            <person name="Kistler H.C."/>
            <person name="Rep M."/>
        </authorList>
    </citation>
    <scope>NUCLEOTIDE SEQUENCE [LARGE SCALE GENOMIC DNA]</scope>
    <source>
        <strain>M3125 / FGSC 7600</strain>
    </source>
</reference>
<reference key="2">
    <citation type="journal article" date="2014" name="Fungal Genet. Biol.">
        <title>The N-terminus region of the putative C2H2 transcription factor Ada1 harbors a species-specific activation motif that regulates asexual reproduction in Fusarium verticillioides.</title>
        <authorList>
            <person name="Malapi-Wight M."/>
            <person name="Kim J.E."/>
            <person name="Shim W.B."/>
        </authorList>
    </citation>
    <scope>INDUCTION</scope>
    <scope>DISRUPTION PHENOTYPE</scope>
    <scope>FUNCTION</scope>
</reference>
<comment type="function">
    <text evidence="1 4">Transcription factor that regulates asexual reproduction (PubMed:24161731). Binds the StuA-response elements (StRE) with the consensus sequence 5'-(A/T)CGCG(T/A)N(A/C)-3' at the promoters of target genes (By similarity).</text>
</comment>
<comment type="subcellular location">
    <subcellularLocation>
        <location evidence="1">Nucleus</location>
    </subcellularLocation>
</comment>
<comment type="induction">
    <text evidence="4">Expression is regulated by the upstream regulator ada1 (PubMed:24161731).</text>
</comment>
<comment type="disruption phenotype">
    <text evidence="4">Results in near absence of conidia production (PubMed:24161731).</text>
</comment>
<comment type="similarity">
    <text evidence="6">Belongs to the EFG1/PHD1/stuA family.</text>
</comment>
<proteinExistence type="evidence at transcript level"/>